<dbReference type="EMBL" id="AF259981">
    <property type="protein sequence ID" value="AAF69011.1"/>
    <property type="molecule type" value="mRNA"/>
</dbReference>
<dbReference type="RefSeq" id="NP_113778.1">
    <property type="nucleotide sequence ID" value="NM_031590.1"/>
</dbReference>
<dbReference type="SMR" id="Q9JHC6"/>
<dbReference type="FunCoup" id="Q9JHC6">
    <property type="interactions" value="21"/>
</dbReference>
<dbReference type="STRING" id="10116.ENSRNOP00000014346"/>
<dbReference type="GlyCosmos" id="Q9JHC6">
    <property type="glycosylation" value="1 site, No reported glycans"/>
</dbReference>
<dbReference type="GlyGen" id="Q9JHC6">
    <property type="glycosylation" value="1 site"/>
</dbReference>
<dbReference type="PaxDb" id="10116-ENSRNOP00000014346"/>
<dbReference type="GeneID" id="29576"/>
<dbReference type="KEGG" id="rno:29576"/>
<dbReference type="UCSC" id="RGD:621867">
    <property type="organism name" value="rat"/>
</dbReference>
<dbReference type="AGR" id="RGD:621867"/>
<dbReference type="CTD" id="8839"/>
<dbReference type="RGD" id="621867">
    <property type="gene designation" value="Ccn5"/>
</dbReference>
<dbReference type="eggNOG" id="ENOG502RXIT">
    <property type="taxonomic scope" value="Eukaryota"/>
</dbReference>
<dbReference type="InParanoid" id="Q9JHC6"/>
<dbReference type="PhylomeDB" id="Q9JHC6"/>
<dbReference type="PRO" id="PR:Q9JHC6"/>
<dbReference type="Proteomes" id="UP000002494">
    <property type="component" value="Unplaced"/>
</dbReference>
<dbReference type="GO" id="GO:0009986">
    <property type="term" value="C:cell surface"/>
    <property type="evidence" value="ECO:0000314"/>
    <property type="project" value="RGD"/>
</dbReference>
<dbReference type="GO" id="GO:0031012">
    <property type="term" value="C:extracellular matrix"/>
    <property type="evidence" value="ECO:0000318"/>
    <property type="project" value="GO_Central"/>
</dbReference>
<dbReference type="GO" id="GO:0005615">
    <property type="term" value="C:extracellular space"/>
    <property type="evidence" value="ECO:0000250"/>
    <property type="project" value="UniProtKB"/>
</dbReference>
<dbReference type="GO" id="GO:0005634">
    <property type="term" value="C:nucleus"/>
    <property type="evidence" value="ECO:0000314"/>
    <property type="project" value="UniProtKB"/>
</dbReference>
<dbReference type="GO" id="GO:0005886">
    <property type="term" value="C:plasma membrane"/>
    <property type="evidence" value="ECO:0000266"/>
    <property type="project" value="RGD"/>
</dbReference>
<dbReference type="GO" id="GO:0002102">
    <property type="term" value="C:podosome"/>
    <property type="evidence" value="ECO:0000314"/>
    <property type="project" value="UniProtKB"/>
</dbReference>
<dbReference type="GO" id="GO:0008201">
    <property type="term" value="F:heparin binding"/>
    <property type="evidence" value="ECO:0000318"/>
    <property type="project" value="GO_Central"/>
</dbReference>
<dbReference type="GO" id="GO:0005178">
    <property type="term" value="F:integrin binding"/>
    <property type="evidence" value="ECO:0000314"/>
    <property type="project" value="UniProtKB"/>
</dbReference>
<dbReference type="GO" id="GO:0007155">
    <property type="term" value="P:cell adhesion"/>
    <property type="evidence" value="ECO:0000318"/>
    <property type="project" value="GO_Central"/>
</dbReference>
<dbReference type="GO" id="GO:0008285">
    <property type="term" value="P:negative regulation of cell population proliferation"/>
    <property type="evidence" value="ECO:0000314"/>
    <property type="project" value="RGD"/>
</dbReference>
<dbReference type="GO" id="GO:0045597">
    <property type="term" value="P:positive regulation of cell differentiation"/>
    <property type="evidence" value="ECO:0000318"/>
    <property type="project" value="GO_Central"/>
</dbReference>
<dbReference type="GO" id="GO:0001558">
    <property type="term" value="P:regulation of cell growth"/>
    <property type="evidence" value="ECO:0000266"/>
    <property type="project" value="RGD"/>
</dbReference>
<dbReference type="GO" id="GO:0007165">
    <property type="term" value="P:signal transduction"/>
    <property type="evidence" value="ECO:0000318"/>
    <property type="project" value="GO_Central"/>
</dbReference>
<dbReference type="FunFam" id="2.20.100.10:FF:000084">
    <property type="entry name" value="WNT1-inducible-signaling pathway protein 2 isoform X1"/>
    <property type="match status" value="1"/>
</dbReference>
<dbReference type="Gene3D" id="2.10.70.10">
    <property type="entry name" value="Complement Module, domain 1"/>
    <property type="match status" value="1"/>
</dbReference>
<dbReference type="Gene3D" id="2.20.100.10">
    <property type="entry name" value="Thrombospondin type-1 (TSP1) repeat"/>
    <property type="match status" value="1"/>
</dbReference>
<dbReference type="InterPro" id="IPR050941">
    <property type="entry name" value="CCN"/>
</dbReference>
<dbReference type="InterPro" id="IPR009030">
    <property type="entry name" value="Growth_fac_rcpt_cys_sf"/>
</dbReference>
<dbReference type="InterPro" id="IPR000867">
    <property type="entry name" value="IGFBP-like"/>
</dbReference>
<dbReference type="InterPro" id="IPR017891">
    <property type="entry name" value="Insulin_GF-bd_Cys-rich_CS"/>
</dbReference>
<dbReference type="InterPro" id="IPR043973">
    <property type="entry name" value="TSP1_CCN"/>
</dbReference>
<dbReference type="InterPro" id="IPR000884">
    <property type="entry name" value="TSP1_rpt"/>
</dbReference>
<dbReference type="InterPro" id="IPR036383">
    <property type="entry name" value="TSP1_rpt_sf"/>
</dbReference>
<dbReference type="InterPro" id="IPR001007">
    <property type="entry name" value="VWF_dom"/>
</dbReference>
<dbReference type="PANTHER" id="PTHR11348:SF22">
    <property type="entry name" value="CCN FAMILY MEMBER 5"/>
    <property type="match status" value="1"/>
</dbReference>
<dbReference type="PANTHER" id="PTHR11348">
    <property type="entry name" value="CONNECTIVE TISSUE GROWTH FACTOR-RELATED"/>
    <property type="match status" value="1"/>
</dbReference>
<dbReference type="Pfam" id="PF00219">
    <property type="entry name" value="IGFBP"/>
    <property type="match status" value="1"/>
</dbReference>
<dbReference type="Pfam" id="PF19035">
    <property type="entry name" value="TSP1_CCN"/>
    <property type="match status" value="1"/>
</dbReference>
<dbReference type="Pfam" id="PF00093">
    <property type="entry name" value="VWC"/>
    <property type="match status" value="1"/>
</dbReference>
<dbReference type="SMART" id="SM00121">
    <property type="entry name" value="IB"/>
    <property type="match status" value="1"/>
</dbReference>
<dbReference type="SMART" id="SM00209">
    <property type="entry name" value="TSP1"/>
    <property type="match status" value="1"/>
</dbReference>
<dbReference type="SMART" id="SM00214">
    <property type="entry name" value="VWC"/>
    <property type="match status" value="1"/>
</dbReference>
<dbReference type="SUPFAM" id="SSF57603">
    <property type="entry name" value="FnI-like domain"/>
    <property type="match status" value="1"/>
</dbReference>
<dbReference type="SUPFAM" id="SSF57184">
    <property type="entry name" value="Growth factor receptor domain"/>
    <property type="match status" value="1"/>
</dbReference>
<dbReference type="SUPFAM" id="SSF82895">
    <property type="entry name" value="TSP-1 type 1 repeat"/>
    <property type="match status" value="1"/>
</dbReference>
<dbReference type="PROSITE" id="PS00222">
    <property type="entry name" value="IGFBP_N_1"/>
    <property type="match status" value="1"/>
</dbReference>
<dbReference type="PROSITE" id="PS51323">
    <property type="entry name" value="IGFBP_N_2"/>
    <property type="match status" value="1"/>
</dbReference>
<dbReference type="PROSITE" id="PS50092">
    <property type="entry name" value="TSP1"/>
    <property type="match status" value="1"/>
</dbReference>
<dbReference type="PROSITE" id="PS01208">
    <property type="entry name" value="VWFC_1"/>
    <property type="match status" value="1"/>
</dbReference>
<dbReference type="PROSITE" id="PS50184">
    <property type="entry name" value="VWFC_2"/>
    <property type="match status" value="1"/>
</dbReference>
<feature type="signal peptide" evidence="2">
    <location>
        <begin position="1"/>
        <end position="23"/>
    </location>
</feature>
<feature type="chain" id="PRO_0000014411" description="CCN family member 5">
    <location>
        <begin position="24"/>
        <end position="250"/>
    </location>
</feature>
<feature type="domain" description="IGFBP N-terminal" evidence="5">
    <location>
        <begin position="24"/>
        <end position="103"/>
    </location>
</feature>
<feature type="domain" description="VWFC" evidence="4">
    <location>
        <begin position="98"/>
        <end position="164"/>
    </location>
</feature>
<feature type="domain" description="TSP type-1" evidence="3">
    <location>
        <begin position="194"/>
        <end position="238"/>
    </location>
</feature>
<feature type="glycosylation site" description="N-linked (GlcNAc...) asparagine" evidence="2">
    <location>
        <position position="196"/>
    </location>
</feature>
<feature type="disulfide bond" evidence="5">
    <location>
        <begin position="22"/>
        <end position="50"/>
    </location>
</feature>
<feature type="disulfide bond" evidence="5">
    <location>
        <begin position="26"/>
        <end position="52"/>
    </location>
</feature>
<feature type="disulfide bond" evidence="5">
    <location>
        <begin position="32"/>
        <end position="53"/>
    </location>
</feature>
<feature type="disulfide bond" evidence="5">
    <location>
        <begin position="39"/>
        <end position="56"/>
    </location>
</feature>
<feature type="disulfide bond" evidence="5">
    <location>
        <begin position="64"/>
        <end position="78"/>
    </location>
</feature>
<feature type="disulfide bond" evidence="5">
    <location>
        <begin position="70"/>
        <end position="100"/>
    </location>
</feature>
<comment type="function">
    <text evidence="1">May play an important role in modulating bone turnover. Promotes the adhesion of osteoblast cells and inhibits the binding of fibrinogen to integrin receptors. In addition, inhibits osteocalcin production (By similarity).</text>
</comment>
<comment type="subcellular location">
    <subcellularLocation>
        <location evidence="6">Secreted</location>
    </subcellularLocation>
</comment>
<comment type="similarity">
    <text evidence="6">Belongs to the CCN family.</text>
</comment>
<organism>
    <name type="scientific">Rattus norvegicus</name>
    <name type="common">Rat</name>
    <dbReference type="NCBI Taxonomy" id="10116"/>
    <lineage>
        <taxon>Eukaryota</taxon>
        <taxon>Metazoa</taxon>
        <taxon>Chordata</taxon>
        <taxon>Craniata</taxon>
        <taxon>Vertebrata</taxon>
        <taxon>Euteleostomi</taxon>
        <taxon>Mammalia</taxon>
        <taxon>Eutheria</taxon>
        <taxon>Euarchontoglires</taxon>
        <taxon>Glires</taxon>
        <taxon>Rodentia</taxon>
        <taxon>Myomorpha</taxon>
        <taxon>Muroidea</taxon>
        <taxon>Muridae</taxon>
        <taxon>Murinae</taxon>
        <taxon>Rattus</taxon>
    </lineage>
</organism>
<reference key="1">
    <citation type="journal article" date="1998" name="Mol. Cell. Biol.">
        <title>Identification of rCop-1, a new member of the CCN protein family, as a negative regulator for cell transformation.</title>
        <authorList>
            <person name="Zhang R."/>
            <person name="Averboukh L."/>
            <person name="Zhu W."/>
            <person name="Zhang H."/>
            <person name="Jo H."/>
            <person name="Dempsey P.J."/>
            <person name="Coffey R.J."/>
            <person name="Pardee A.B."/>
            <person name="Liang P."/>
        </authorList>
    </citation>
    <scope>NUCLEOTIDE SEQUENCE [MRNA]</scope>
</reference>
<sequence>MRGSPLIRLLATSFLCLLSMVCAQLCRTPCTCPWTPPQCPQGVPLVLDGCGCCKVCARRLTESCEHLHVCEPSQGLVCQPGAGPGGHGAVCLLDEDDGDCEVNGRRYLDGETFKPNCRVLCRCDDGGFTCLPLCSEDVTLPSWDCPRPKRIQVPGKCCPEWVCDQGVTPAIQRSAAQGHQLSALVTPASADAPWPNWSTAWGPCSTTCGLGIATRVSNQNRFCQLEIQRRLCLPRPCLAARSHSSWNSAF</sequence>
<proteinExistence type="evidence at transcript level"/>
<keyword id="KW-0130">Cell adhesion</keyword>
<keyword id="KW-1015">Disulfide bond</keyword>
<keyword id="KW-0325">Glycoprotein</keyword>
<keyword id="KW-1185">Reference proteome</keyword>
<keyword id="KW-0964">Secreted</keyword>
<keyword id="KW-0732">Signal</keyword>
<evidence type="ECO:0000250" key="1"/>
<evidence type="ECO:0000255" key="2"/>
<evidence type="ECO:0000255" key="3">
    <source>
        <dbReference type="PROSITE-ProRule" id="PRU00210"/>
    </source>
</evidence>
<evidence type="ECO:0000255" key="4">
    <source>
        <dbReference type="PROSITE-ProRule" id="PRU00220"/>
    </source>
</evidence>
<evidence type="ECO:0000255" key="5">
    <source>
        <dbReference type="PROSITE-ProRule" id="PRU00653"/>
    </source>
</evidence>
<evidence type="ECO:0000305" key="6"/>
<gene>
    <name type="primary">Ccn5</name>
    <name type="synonym">Cop1</name>
    <name type="synonym">Ctgfl</name>
    <name type="synonym">Wisp2</name>
</gene>
<accession>Q9JHC6</accession>
<name>CCN5_RAT</name>
<protein>
    <recommendedName>
        <fullName evidence="6">CCN family member 5</fullName>
    </recommendedName>
    <alternativeName>
        <fullName>CCN family protein COP-1</fullName>
    </alternativeName>
    <alternativeName>
        <fullName>Connective tissue growth factor-like protein</fullName>
        <shortName>CTGF-L</shortName>
    </alternativeName>
    <alternativeName>
        <fullName>WNT1-inducible-signaling pathway protein 2</fullName>
        <shortName>WISP-2</shortName>
    </alternativeName>
</protein>